<proteinExistence type="inferred from homology"/>
<sequence length="334" mass="36209">MAITVGINGFGRIGRLVLRIALSRKDIQIVAINDPFIAPEYASYMFKYDSTHGRYSGEVSHEGENIVIDGKKIRVYQERDPVNIPWGKDGVDYVIDSTGVFKELDSAQKHIDAGAKKVVITAPSSTAPMFVVGVNEDKYTPDLNIISNASCTTNCLAPLAKIINNKFGIEEGLMTTVHSITATQKTVDGPSHKDWRGGRTASGNIIPSSTGAAKAVGKVIPELAGKLTGMSLRVPTVDVSVVDLTVKLLKDATYDEIKAAVKEAAEGPLKGVVGYTEDQVVSSDFLTDNRSSIFDAEAGIWLSPRFVKLIAWYDNEYGYSTRVVDLLEYVASKN</sequence>
<protein>
    <recommendedName>
        <fullName>Glyceraldehyde-3-phosphate dehydrogenase</fullName>
        <shortName>GAPDH</shortName>
        <ecNumber>1.2.1.12</ecNumber>
    </recommendedName>
</protein>
<evidence type="ECO:0000250" key="1"/>
<evidence type="ECO:0000255" key="2">
    <source>
        <dbReference type="PROSITE-ProRule" id="PRU10009"/>
    </source>
</evidence>
<evidence type="ECO:0000305" key="3"/>
<gene>
    <name type="primary">GPD</name>
    <name type="ORF">BN7_5327</name>
</gene>
<dbReference type="EC" id="1.2.1.12"/>
<dbReference type="EMBL" id="AF053300">
    <property type="protein sequence ID" value="AAF21710.1"/>
    <property type="molecule type" value="Genomic_DNA"/>
</dbReference>
<dbReference type="EMBL" id="CAIF01000208">
    <property type="protein sequence ID" value="CCH45741.1"/>
    <property type="molecule type" value="Genomic_DNA"/>
</dbReference>
<dbReference type="SMR" id="Q9UVC0"/>
<dbReference type="FunCoup" id="Q9UVC0">
    <property type="interactions" value="1309"/>
</dbReference>
<dbReference type="STRING" id="1206466.Q9UVC0"/>
<dbReference type="eggNOG" id="KOG0657">
    <property type="taxonomic scope" value="Eukaryota"/>
</dbReference>
<dbReference type="HOGENOM" id="CLU_030140_0_3_1"/>
<dbReference type="InParanoid" id="Q9UVC0"/>
<dbReference type="UniPathway" id="UPA00109">
    <property type="reaction ID" value="UER00184"/>
</dbReference>
<dbReference type="Proteomes" id="UP000009328">
    <property type="component" value="Unassembled WGS sequence"/>
</dbReference>
<dbReference type="GO" id="GO:0005829">
    <property type="term" value="C:cytosol"/>
    <property type="evidence" value="ECO:0007669"/>
    <property type="project" value="TreeGrafter"/>
</dbReference>
<dbReference type="GO" id="GO:0030312">
    <property type="term" value="C:external encapsulating structure"/>
    <property type="evidence" value="ECO:0007669"/>
    <property type="project" value="UniProtKB-ARBA"/>
</dbReference>
<dbReference type="GO" id="GO:0004365">
    <property type="term" value="F:glyceraldehyde-3-phosphate dehydrogenase (NAD+) (phosphorylating) activity"/>
    <property type="evidence" value="ECO:0007669"/>
    <property type="project" value="UniProtKB-EC"/>
</dbReference>
<dbReference type="GO" id="GO:0051287">
    <property type="term" value="F:NAD binding"/>
    <property type="evidence" value="ECO:0007669"/>
    <property type="project" value="InterPro"/>
</dbReference>
<dbReference type="GO" id="GO:0050661">
    <property type="term" value="F:NADP binding"/>
    <property type="evidence" value="ECO:0007669"/>
    <property type="project" value="InterPro"/>
</dbReference>
<dbReference type="GO" id="GO:0006006">
    <property type="term" value="P:glucose metabolic process"/>
    <property type="evidence" value="ECO:0007669"/>
    <property type="project" value="InterPro"/>
</dbReference>
<dbReference type="GO" id="GO:0006096">
    <property type="term" value="P:glycolytic process"/>
    <property type="evidence" value="ECO:0007669"/>
    <property type="project" value="UniProtKB-UniPathway"/>
</dbReference>
<dbReference type="CDD" id="cd18126">
    <property type="entry name" value="GAPDH_I_C"/>
    <property type="match status" value="1"/>
</dbReference>
<dbReference type="CDD" id="cd05214">
    <property type="entry name" value="GAPDH_I_N"/>
    <property type="match status" value="1"/>
</dbReference>
<dbReference type="FunFam" id="3.30.360.10:FF:000001">
    <property type="entry name" value="Glyceraldehyde-3-phosphate dehydrogenase"/>
    <property type="match status" value="1"/>
</dbReference>
<dbReference type="FunFam" id="3.40.50.720:FF:000020">
    <property type="entry name" value="Glyceraldehyde-3-phosphate dehydrogenase"/>
    <property type="match status" value="1"/>
</dbReference>
<dbReference type="Gene3D" id="3.30.360.10">
    <property type="entry name" value="Dihydrodipicolinate Reductase, domain 2"/>
    <property type="match status" value="1"/>
</dbReference>
<dbReference type="Gene3D" id="3.40.50.720">
    <property type="entry name" value="NAD(P)-binding Rossmann-like Domain"/>
    <property type="match status" value="1"/>
</dbReference>
<dbReference type="InterPro" id="IPR020831">
    <property type="entry name" value="GlycerAld/Erythrose_P_DH"/>
</dbReference>
<dbReference type="InterPro" id="IPR020830">
    <property type="entry name" value="GlycerAld_3-P_DH_AS"/>
</dbReference>
<dbReference type="InterPro" id="IPR020829">
    <property type="entry name" value="GlycerAld_3-P_DH_cat"/>
</dbReference>
<dbReference type="InterPro" id="IPR020828">
    <property type="entry name" value="GlycerAld_3-P_DH_NAD(P)-bd"/>
</dbReference>
<dbReference type="InterPro" id="IPR006424">
    <property type="entry name" value="Glyceraldehyde-3-P_DH_1"/>
</dbReference>
<dbReference type="InterPro" id="IPR036291">
    <property type="entry name" value="NAD(P)-bd_dom_sf"/>
</dbReference>
<dbReference type="NCBIfam" id="TIGR01534">
    <property type="entry name" value="GAPDH-I"/>
    <property type="match status" value="1"/>
</dbReference>
<dbReference type="PANTHER" id="PTHR10836">
    <property type="entry name" value="GLYCERALDEHYDE 3-PHOSPHATE DEHYDROGENASE"/>
    <property type="match status" value="1"/>
</dbReference>
<dbReference type="PANTHER" id="PTHR10836:SF76">
    <property type="entry name" value="GLYCERALDEHYDE-3-PHOSPHATE DEHYDROGENASE-RELATED"/>
    <property type="match status" value="1"/>
</dbReference>
<dbReference type="Pfam" id="PF02800">
    <property type="entry name" value="Gp_dh_C"/>
    <property type="match status" value="1"/>
</dbReference>
<dbReference type="Pfam" id="PF00044">
    <property type="entry name" value="Gp_dh_N"/>
    <property type="match status" value="1"/>
</dbReference>
<dbReference type="PIRSF" id="PIRSF000149">
    <property type="entry name" value="GAP_DH"/>
    <property type="match status" value="1"/>
</dbReference>
<dbReference type="PRINTS" id="PR00078">
    <property type="entry name" value="G3PDHDRGNASE"/>
</dbReference>
<dbReference type="SMART" id="SM00846">
    <property type="entry name" value="Gp_dh_N"/>
    <property type="match status" value="1"/>
</dbReference>
<dbReference type="SUPFAM" id="SSF55347">
    <property type="entry name" value="Glyceraldehyde-3-phosphate dehydrogenase-like, C-terminal domain"/>
    <property type="match status" value="1"/>
</dbReference>
<dbReference type="SUPFAM" id="SSF51735">
    <property type="entry name" value="NAD(P)-binding Rossmann-fold domains"/>
    <property type="match status" value="1"/>
</dbReference>
<dbReference type="PROSITE" id="PS00071">
    <property type="entry name" value="GAPDH"/>
    <property type="match status" value="1"/>
</dbReference>
<organism>
    <name type="scientific">Wickerhamomyces ciferrii (strain ATCC 14091 / BCRC 22168 / CBS 111 / JCM 3599 / NBRC 0793 / NRRL Y-1031 F-60-10)</name>
    <name type="common">Yeast</name>
    <name type="synonym">Pichia ciferrii</name>
    <dbReference type="NCBI Taxonomy" id="1206466"/>
    <lineage>
        <taxon>Eukaryota</taxon>
        <taxon>Fungi</taxon>
        <taxon>Dikarya</taxon>
        <taxon>Ascomycota</taxon>
        <taxon>Saccharomycotina</taxon>
        <taxon>Saccharomycetes</taxon>
        <taxon>Phaffomycetales</taxon>
        <taxon>Wickerhamomycetaceae</taxon>
        <taxon>Wickerhamomyces</taxon>
    </lineage>
</organism>
<name>G3P_WICCF</name>
<reference key="1">
    <citation type="submission" date="1998-03" db="EMBL/GenBank/DDBJ databases">
        <authorList>
            <person name="Bae J.-H."/>
            <person name="Sohn J.-H."/>
            <person name="Choi E.-S."/>
            <person name="Park J.-S."/>
            <person name="Rhee S.-K."/>
        </authorList>
    </citation>
    <scope>NUCLEOTIDE SEQUENCE [GENOMIC DNA]</scope>
    <source>
        <strain>ATCC 14091 / BCRC 22168 / CBS 111 / JCM 3599 / NBRC 0793 / NRRL Y-1031 F-60-10</strain>
    </source>
</reference>
<reference key="2">
    <citation type="journal article" date="2012" name="Eukaryot. Cell">
        <title>Draft genome sequence of Wickerhamomyces ciferrii NRRL Y-1031 F-60-10.</title>
        <authorList>
            <person name="Schneider J."/>
            <person name="Andrea H."/>
            <person name="Blom J."/>
            <person name="Jaenicke S."/>
            <person name="Rueckert C."/>
            <person name="Schorsch C."/>
            <person name="Szczepanowski R."/>
            <person name="Farwick M."/>
            <person name="Goesmann A."/>
            <person name="Puehler A."/>
            <person name="Schaffer S."/>
            <person name="Tauch A."/>
            <person name="Koehler T."/>
            <person name="Brinkrolf K."/>
        </authorList>
    </citation>
    <scope>NUCLEOTIDE SEQUENCE [LARGE SCALE GENOMIC DNA]</scope>
    <source>
        <strain>ATCC 14091 / BCRC 22168 / CBS 111 / JCM 3599 / NBRC 0793 / NRRL Y-1031 F-60-10</strain>
    </source>
</reference>
<keyword id="KW-0963">Cytoplasm</keyword>
<keyword id="KW-0324">Glycolysis</keyword>
<keyword id="KW-0520">NAD</keyword>
<keyword id="KW-0560">Oxidoreductase</keyword>
<keyword id="KW-1185">Reference proteome</keyword>
<comment type="catalytic activity">
    <reaction evidence="2">
        <text>D-glyceraldehyde 3-phosphate + phosphate + NAD(+) = (2R)-3-phospho-glyceroyl phosphate + NADH + H(+)</text>
        <dbReference type="Rhea" id="RHEA:10300"/>
        <dbReference type="ChEBI" id="CHEBI:15378"/>
        <dbReference type="ChEBI" id="CHEBI:43474"/>
        <dbReference type="ChEBI" id="CHEBI:57540"/>
        <dbReference type="ChEBI" id="CHEBI:57604"/>
        <dbReference type="ChEBI" id="CHEBI:57945"/>
        <dbReference type="ChEBI" id="CHEBI:59776"/>
        <dbReference type="EC" id="1.2.1.12"/>
    </reaction>
</comment>
<comment type="pathway">
    <text>Carbohydrate degradation; glycolysis; pyruvate from D-glyceraldehyde 3-phosphate: step 1/5.</text>
</comment>
<comment type="subunit">
    <text evidence="1">Homotetramer.</text>
</comment>
<comment type="subcellular location">
    <subcellularLocation>
        <location evidence="1">Cytoplasm</location>
    </subcellularLocation>
</comment>
<comment type="similarity">
    <text evidence="3">Belongs to the glyceraldehyde-3-phosphate dehydrogenase family.</text>
</comment>
<feature type="chain" id="PRO_0000145571" description="Glyceraldehyde-3-phosphate dehydrogenase">
    <location>
        <begin position="1"/>
        <end position="334"/>
    </location>
</feature>
<feature type="active site" description="Nucleophile" evidence="2">
    <location>
        <position position="151"/>
    </location>
</feature>
<feature type="binding site" evidence="1">
    <location>
        <begin position="12"/>
        <end position="13"/>
    </location>
    <ligand>
        <name>NAD(+)</name>
        <dbReference type="ChEBI" id="CHEBI:57540"/>
    </ligand>
</feature>
<feature type="binding site" evidence="1">
    <location>
        <position position="34"/>
    </location>
    <ligand>
        <name>NAD(+)</name>
        <dbReference type="ChEBI" id="CHEBI:57540"/>
    </ligand>
</feature>
<feature type="binding site" evidence="1">
    <location>
        <position position="79"/>
    </location>
    <ligand>
        <name>NAD(+)</name>
        <dbReference type="ChEBI" id="CHEBI:57540"/>
    </ligand>
</feature>
<feature type="binding site" evidence="1">
    <location>
        <begin position="150"/>
        <end position="152"/>
    </location>
    <ligand>
        <name>D-glyceraldehyde 3-phosphate</name>
        <dbReference type="ChEBI" id="CHEBI:59776"/>
    </ligand>
</feature>
<feature type="binding site" evidence="1">
    <location>
        <position position="181"/>
    </location>
    <ligand>
        <name>D-glyceraldehyde 3-phosphate</name>
        <dbReference type="ChEBI" id="CHEBI:59776"/>
    </ligand>
</feature>
<feature type="binding site" evidence="1">
    <location>
        <begin position="210"/>
        <end position="211"/>
    </location>
    <ligand>
        <name>D-glyceraldehyde 3-phosphate</name>
        <dbReference type="ChEBI" id="CHEBI:59776"/>
    </ligand>
</feature>
<feature type="binding site" evidence="1">
    <location>
        <position position="233"/>
    </location>
    <ligand>
        <name>D-glyceraldehyde 3-phosphate</name>
        <dbReference type="ChEBI" id="CHEBI:59776"/>
    </ligand>
</feature>
<feature type="binding site" evidence="1">
    <location>
        <position position="315"/>
    </location>
    <ligand>
        <name>NAD(+)</name>
        <dbReference type="ChEBI" id="CHEBI:57540"/>
    </ligand>
</feature>
<feature type="site" description="Activates thiol group during catalysis" evidence="1">
    <location>
        <position position="178"/>
    </location>
</feature>
<feature type="sequence conflict" description="In Ref. 1; AAF21710." evidence="3" ref="1">
    <original>GGR</original>
    <variation>SGP</variation>
    <location>
        <begin position="197"/>
        <end position="199"/>
    </location>
</feature>
<accession>Q9UVC0</accession>
<accession>K0KRI2</accession>